<comment type="function">
    <text evidence="1">Core subunit of the mitochondrial membrane respiratory chain NADH dehydrogenase (Complex I) that is believed to belong to the minimal assembly required for catalysis. Complex I functions in the transfer of electrons from NADH to the respiratory chain. The immediate electron acceptor for the enzyme is believed to be ubiquinone (By similarity).</text>
</comment>
<comment type="catalytic activity">
    <reaction>
        <text>a ubiquinone + NADH + 5 H(+)(in) = a ubiquinol + NAD(+) + 4 H(+)(out)</text>
        <dbReference type="Rhea" id="RHEA:29091"/>
        <dbReference type="Rhea" id="RHEA-COMP:9565"/>
        <dbReference type="Rhea" id="RHEA-COMP:9566"/>
        <dbReference type="ChEBI" id="CHEBI:15378"/>
        <dbReference type="ChEBI" id="CHEBI:16389"/>
        <dbReference type="ChEBI" id="CHEBI:17976"/>
        <dbReference type="ChEBI" id="CHEBI:57540"/>
        <dbReference type="ChEBI" id="CHEBI:57945"/>
        <dbReference type="EC" id="7.1.1.2"/>
    </reaction>
</comment>
<comment type="subcellular location">
    <subcellularLocation>
        <location evidence="1">Mitochondrion inner membrane</location>
        <topology evidence="1">Multi-pass membrane protein</topology>
    </subcellularLocation>
</comment>
<comment type="similarity">
    <text evidence="3">Belongs to the complex I subunit 1 family.</text>
</comment>
<organism>
    <name type="scientific">Drosophila pseudoobscura bogotana</name>
    <name type="common">Fruit fly</name>
    <dbReference type="NCBI Taxonomy" id="46244"/>
    <lineage>
        <taxon>Eukaryota</taxon>
        <taxon>Metazoa</taxon>
        <taxon>Ecdysozoa</taxon>
        <taxon>Arthropoda</taxon>
        <taxon>Hexapoda</taxon>
        <taxon>Insecta</taxon>
        <taxon>Pterygota</taxon>
        <taxon>Neoptera</taxon>
        <taxon>Endopterygota</taxon>
        <taxon>Diptera</taxon>
        <taxon>Brachycera</taxon>
        <taxon>Muscomorpha</taxon>
        <taxon>Ephydroidea</taxon>
        <taxon>Drosophilidae</taxon>
        <taxon>Drosophila</taxon>
        <taxon>Sophophora</taxon>
    </lineage>
</organism>
<accession>P84295</accession>
<accession>P51933</accession>
<accession>P51935</accession>
<accession>P51936</accession>
<accession>Q34339</accession>
<accession>Q34366</accession>
<accession>Q34370</accession>
<geneLocation type="mitochondrion"/>
<gene>
    <name type="primary">mt:ND1</name>
    <name type="synonym">ND1</name>
</gene>
<name>NU1M_DROPB</name>
<reference key="1">
    <citation type="journal article" date="1994" name="J. Mol. Evol.">
        <title>Phylogeny of the Drosophila obscura species group deduced from mitochondrial DNA sequences.</title>
        <authorList>
            <person name="Barrio E."/>
            <person name="Latorre A."/>
            <person name="Moya A."/>
        </authorList>
    </citation>
    <scope>NUCLEOTIDE SEQUENCE [GENOMIC DNA]</scope>
</reference>
<feature type="chain" id="PRO_0000117395" description="NADH-ubiquinone oxidoreductase chain 1">
    <location>
        <begin position="1"/>
        <end position="163"/>
    </location>
</feature>
<feature type="transmembrane region" description="Helical" evidence="2">
    <location>
        <begin position="3"/>
        <end position="23"/>
    </location>
</feature>
<feature type="transmembrane region" description="Helical" evidence="2">
    <location>
        <begin position="77"/>
        <end position="97"/>
    </location>
</feature>
<feature type="transmembrane region" description="Helical" evidence="2">
    <location>
        <begin position="104"/>
        <end position="124"/>
    </location>
</feature>
<feature type="transmembrane region" description="Helical" evidence="2">
    <location>
        <begin position="143"/>
        <end position="163"/>
    </location>
</feature>
<feature type="non-consecutive residues" evidence="3">
    <location>
        <begin position="152"/>
        <end position="153"/>
    </location>
</feature>
<proteinExistence type="inferred from homology"/>
<keyword id="KW-0249">Electron transport</keyword>
<keyword id="KW-0472">Membrane</keyword>
<keyword id="KW-0496">Mitochondrion</keyword>
<keyword id="KW-0999">Mitochondrion inner membrane</keyword>
<keyword id="KW-0520">NAD</keyword>
<keyword id="KW-0679">Respiratory chain</keyword>
<keyword id="KW-1278">Translocase</keyword>
<keyword id="KW-0812">Transmembrane</keyword>
<keyword id="KW-1133">Transmembrane helix</keyword>
<keyword id="KW-0813">Transport</keyword>
<keyword id="KW-0830">Ubiquinone</keyword>
<evidence type="ECO:0000250" key="1"/>
<evidence type="ECO:0000255" key="2"/>
<evidence type="ECO:0000305" key="3"/>
<protein>
    <recommendedName>
        <fullName>NADH-ubiquinone oxidoreductase chain 1</fullName>
        <ecNumber>7.1.1.2</ecNumber>
    </recommendedName>
    <alternativeName>
        <fullName>NADH dehydrogenase subunit 1</fullName>
    </alternativeName>
</protein>
<dbReference type="EC" id="7.1.1.2"/>
<dbReference type="EMBL" id="U07321">
    <property type="protein sequence ID" value="AAA76654.1"/>
    <property type="molecule type" value="Genomic_DNA"/>
</dbReference>
<dbReference type="EMBL" id="U07322">
    <property type="protein sequence ID" value="AAA76655.1"/>
    <property type="molecule type" value="Genomic_DNA"/>
</dbReference>
<dbReference type="SMR" id="P84295"/>
<dbReference type="GO" id="GO:0005743">
    <property type="term" value="C:mitochondrial inner membrane"/>
    <property type="evidence" value="ECO:0007669"/>
    <property type="project" value="UniProtKB-SubCell"/>
</dbReference>
<dbReference type="GO" id="GO:0008137">
    <property type="term" value="F:NADH dehydrogenase (ubiquinone) activity"/>
    <property type="evidence" value="ECO:0007669"/>
    <property type="project" value="UniProtKB-EC"/>
</dbReference>
<dbReference type="GO" id="GO:0009060">
    <property type="term" value="P:aerobic respiration"/>
    <property type="evidence" value="ECO:0007669"/>
    <property type="project" value="TreeGrafter"/>
</dbReference>
<dbReference type="InterPro" id="IPR001694">
    <property type="entry name" value="NADH_UbQ_OxRdtase_su1/FPO"/>
</dbReference>
<dbReference type="InterPro" id="IPR018086">
    <property type="entry name" value="NADH_UbQ_OxRdtase_su1_CS"/>
</dbReference>
<dbReference type="PANTHER" id="PTHR11432">
    <property type="entry name" value="NADH DEHYDROGENASE SUBUNIT 1"/>
    <property type="match status" value="1"/>
</dbReference>
<dbReference type="PANTHER" id="PTHR11432:SF3">
    <property type="entry name" value="NADH-UBIQUINONE OXIDOREDUCTASE CHAIN 1"/>
    <property type="match status" value="1"/>
</dbReference>
<dbReference type="Pfam" id="PF00146">
    <property type="entry name" value="NADHdh"/>
    <property type="match status" value="1"/>
</dbReference>
<dbReference type="PROSITE" id="PS00667">
    <property type="entry name" value="COMPLEX1_ND1_1"/>
    <property type="match status" value="1"/>
</dbReference>
<sequence length="163" mass="18266">MEFILSLIGSLLLIICVLVSVAFLTLLERKVLGYIQIRKGPNKVGLMGIPQPFCDAIKLFTKEQTYPLLSNYLSYYISPIFSLFLSLFVWMCMPFFVKLYSFNLGGLFFLCCTSLGVYTVMIAGWSSNSNYALLGGLRAVAQTISYEVSLALIGFKILLFSFL</sequence>